<accession>A1SA57</accession>
<dbReference type="EMBL" id="CP000507">
    <property type="protein sequence ID" value="ABM01264.1"/>
    <property type="molecule type" value="Genomic_DNA"/>
</dbReference>
<dbReference type="RefSeq" id="WP_011761168.1">
    <property type="nucleotide sequence ID" value="NC_008700.1"/>
</dbReference>
<dbReference type="SMR" id="A1SA57"/>
<dbReference type="STRING" id="326297.Sama_3061"/>
<dbReference type="KEGG" id="saz:Sama_3061"/>
<dbReference type="eggNOG" id="COG0359">
    <property type="taxonomic scope" value="Bacteria"/>
</dbReference>
<dbReference type="HOGENOM" id="CLU_078938_4_1_6"/>
<dbReference type="OrthoDB" id="9788336at2"/>
<dbReference type="Proteomes" id="UP000009175">
    <property type="component" value="Chromosome"/>
</dbReference>
<dbReference type="GO" id="GO:1990904">
    <property type="term" value="C:ribonucleoprotein complex"/>
    <property type="evidence" value="ECO:0007669"/>
    <property type="project" value="UniProtKB-KW"/>
</dbReference>
<dbReference type="GO" id="GO:0005840">
    <property type="term" value="C:ribosome"/>
    <property type="evidence" value="ECO:0007669"/>
    <property type="project" value="UniProtKB-KW"/>
</dbReference>
<dbReference type="GO" id="GO:0019843">
    <property type="term" value="F:rRNA binding"/>
    <property type="evidence" value="ECO:0007669"/>
    <property type="project" value="UniProtKB-UniRule"/>
</dbReference>
<dbReference type="GO" id="GO:0003735">
    <property type="term" value="F:structural constituent of ribosome"/>
    <property type="evidence" value="ECO:0007669"/>
    <property type="project" value="InterPro"/>
</dbReference>
<dbReference type="GO" id="GO:0006412">
    <property type="term" value="P:translation"/>
    <property type="evidence" value="ECO:0007669"/>
    <property type="project" value="UniProtKB-UniRule"/>
</dbReference>
<dbReference type="FunFam" id="3.10.430.100:FF:000001">
    <property type="entry name" value="50S ribosomal protein L9"/>
    <property type="match status" value="1"/>
</dbReference>
<dbReference type="FunFam" id="3.40.5.10:FF:000001">
    <property type="entry name" value="50S ribosomal protein L9"/>
    <property type="match status" value="1"/>
</dbReference>
<dbReference type="Gene3D" id="3.10.430.100">
    <property type="entry name" value="Ribosomal protein L9, C-terminal domain"/>
    <property type="match status" value="1"/>
</dbReference>
<dbReference type="Gene3D" id="3.40.5.10">
    <property type="entry name" value="Ribosomal protein L9, N-terminal domain"/>
    <property type="match status" value="1"/>
</dbReference>
<dbReference type="HAMAP" id="MF_00503">
    <property type="entry name" value="Ribosomal_bL9"/>
    <property type="match status" value="1"/>
</dbReference>
<dbReference type="InterPro" id="IPR000244">
    <property type="entry name" value="Ribosomal_bL9"/>
</dbReference>
<dbReference type="InterPro" id="IPR009027">
    <property type="entry name" value="Ribosomal_bL9/RNase_H1_N"/>
</dbReference>
<dbReference type="InterPro" id="IPR020594">
    <property type="entry name" value="Ribosomal_bL9_bac/chp"/>
</dbReference>
<dbReference type="InterPro" id="IPR020069">
    <property type="entry name" value="Ribosomal_bL9_C"/>
</dbReference>
<dbReference type="InterPro" id="IPR036791">
    <property type="entry name" value="Ribosomal_bL9_C_sf"/>
</dbReference>
<dbReference type="InterPro" id="IPR020070">
    <property type="entry name" value="Ribosomal_bL9_N"/>
</dbReference>
<dbReference type="InterPro" id="IPR036935">
    <property type="entry name" value="Ribosomal_bL9_N_sf"/>
</dbReference>
<dbReference type="NCBIfam" id="TIGR00158">
    <property type="entry name" value="L9"/>
    <property type="match status" value="1"/>
</dbReference>
<dbReference type="PANTHER" id="PTHR21368">
    <property type="entry name" value="50S RIBOSOMAL PROTEIN L9"/>
    <property type="match status" value="1"/>
</dbReference>
<dbReference type="Pfam" id="PF03948">
    <property type="entry name" value="Ribosomal_L9_C"/>
    <property type="match status" value="1"/>
</dbReference>
<dbReference type="Pfam" id="PF01281">
    <property type="entry name" value="Ribosomal_L9_N"/>
    <property type="match status" value="1"/>
</dbReference>
<dbReference type="SUPFAM" id="SSF55658">
    <property type="entry name" value="L9 N-domain-like"/>
    <property type="match status" value="1"/>
</dbReference>
<dbReference type="SUPFAM" id="SSF55653">
    <property type="entry name" value="Ribosomal protein L9 C-domain"/>
    <property type="match status" value="1"/>
</dbReference>
<dbReference type="PROSITE" id="PS00651">
    <property type="entry name" value="RIBOSOMAL_L9"/>
    <property type="match status" value="1"/>
</dbReference>
<sequence length="149" mass="15506">MNVILLDKIANLGNLGDQVSVKAGYARNFLLPQGKAVVANAENVKVFEARRAELEAKLAADLAAAADRAEKIAALEAVVIASKAGDEGKLFGSVGTRDIADAVTAAGVELAKAEVRLPLGALRTTGDFEVEVQLHTEVKSVVKVTVVAE</sequence>
<evidence type="ECO:0000255" key="1">
    <source>
        <dbReference type="HAMAP-Rule" id="MF_00503"/>
    </source>
</evidence>
<evidence type="ECO:0000305" key="2"/>
<comment type="function">
    <text evidence="1">Binds to the 23S rRNA.</text>
</comment>
<comment type="similarity">
    <text evidence="1">Belongs to the bacterial ribosomal protein bL9 family.</text>
</comment>
<protein>
    <recommendedName>
        <fullName evidence="1">Large ribosomal subunit protein bL9</fullName>
    </recommendedName>
    <alternativeName>
        <fullName evidence="2">50S ribosomal protein L9</fullName>
    </alternativeName>
</protein>
<keyword id="KW-1185">Reference proteome</keyword>
<keyword id="KW-0687">Ribonucleoprotein</keyword>
<keyword id="KW-0689">Ribosomal protein</keyword>
<keyword id="KW-0694">RNA-binding</keyword>
<keyword id="KW-0699">rRNA-binding</keyword>
<proteinExistence type="inferred from homology"/>
<gene>
    <name evidence="1" type="primary">rplI</name>
    <name type="ordered locus">Sama_3061</name>
</gene>
<feature type="chain" id="PRO_1000014854" description="Large ribosomal subunit protein bL9">
    <location>
        <begin position="1"/>
        <end position="149"/>
    </location>
</feature>
<name>RL9_SHEAM</name>
<reference key="1">
    <citation type="submission" date="2006-12" db="EMBL/GenBank/DDBJ databases">
        <title>Complete sequence of Shewanella amazonensis SB2B.</title>
        <authorList>
            <consortium name="US DOE Joint Genome Institute"/>
            <person name="Copeland A."/>
            <person name="Lucas S."/>
            <person name="Lapidus A."/>
            <person name="Barry K."/>
            <person name="Detter J.C."/>
            <person name="Glavina del Rio T."/>
            <person name="Hammon N."/>
            <person name="Israni S."/>
            <person name="Dalin E."/>
            <person name="Tice H."/>
            <person name="Pitluck S."/>
            <person name="Munk A.C."/>
            <person name="Brettin T."/>
            <person name="Bruce D."/>
            <person name="Han C."/>
            <person name="Tapia R."/>
            <person name="Gilna P."/>
            <person name="Schmutz J."/>
            <person name="Larimer F."/>
            <person name="Land M."/>
            <person name="Hauser L."/>
            <person name="Kyrpides N."/>
            <person name="Mikhailova N."/>
            <person name="Fredrickson J."/>
            <person name="Richardson P."/>
        </authorList>
    </citation>
    <scope>NUCLEOTIDE SEQUENCE [LARGE SCALE GENOMIC DNA]</scope>
    <source>
        <strain>ATCC BAA-1098 / SB2B</strain>
    </source>
</reference>
<organism>
    <name type="scientific">Shewanella amazonensis (strain ATCC BAA-1098 / SB2B)</name>
    <dbReference type="NCBI Taxonomy" id="326297"/>
    <lineage>
        <taxon>Bacteria</taxon>
        <taxon>Pseudomonadati</taxon>
        <taxon>Pseudomonadota</taxon>
        <taxon>Gammaproteobacteria</taxon>
        <taxon>Alteromonadales</taxon>
        <taxon>Shewanellaceae</taxon>
        <taxon>Shewanella</taxon>
    </lineage>
</organism>